<reference key="1">
    <citation type="journal article" date="2000" name="Nature">
        <title>Complete DNA sequence of a serogroup A strain of Neisseria meningitidis Z2491.</title>
        <authorList>
            <person name="Parkhill J."/>
            <person name="Achtman M."/>
            <person name="James K.D."/>
            <person name="Bentley S.D."/>
            <person name="Churcher C.M."/>
            <person name="Klee S.R."/>
            <person name="Morelli G."/>
            <person name="Basham D."/>
            <person name="Brown D."/>
            <person name="Chillingworth T."/>
            <person name="Davies R.M."/>
            <person name="Davis P."/>
            <person name="Devlin K."/>
            <person name="Feltwell T."/>
            <person name="Hamlin N."/>
            <person name="Holroyd S."/>
            <person name="Jagels K."/>
            <person name="Leather S."/>
            <person name="Moule S."/>
            <person name="Mungall K.L."/>
            <person name="Quail M.A."/>
            <person name="Rajandream M.A."/>
            <person name="Rutherford K.M."/>
            <person name="Simmonds M."/>
            <person name="Skelton J."/>
            <person name="Whitehead S."/>
            <person name="Spratt B.G."/>
            <person name="Barrell B.G."/>
        </authorList>
    </citation>
    <scope>NUCLEOTIDE SEQUENCE [LARGE SCALE GENOMIC DNA]</scope>
    <source>
        <strain>DSM 15465 / Z2491</strain>
    </source>
</reference>
<gene>
    <name evidence="1" type="primary">dadA</name>
    <name type="ordered locus">NMA0092</name>
</gene>
<evidence type="ECO:0000255" key="1">
    <source>
        <dbReference type="HAMAP-Rule" id="MF_01202"/>
    </source>
</evidence>
<accession>Q9JX24</accession>
<accession>A1INV4</accession>
<protein>
    <recommendedName>
        <fullName evidence="1">D-amino acid dehydrogenase</fullName>
        <ecNumber evidence="1">1.4.99.-</ecNumber>
    </recommendedName>
</protein>
<dbReference type="EC" id="1.4.99.-" evidence="1"/>
<dbReference type="EMBL" id="AL157959">
    <property type="protein sequence ID" value="CAM07411.1"/>
    <property type="molecule type" value="Genomic_DNA"/>
</dbReference>
<dbReference type="PIR" id="C82001">
    <property type="entry name" value="C82001"/>
</dbReference>
<dbReference type="RefSeq" id="WP_002245794.1">
    <property type="nucleotide sequence ID" value="NC_003116.1"/>
</dbReference>
<dbReference type="SMR" id="Q9JX24"/>
<dbReference type="EnsemblBacteria" id="CAM07411">
    <property type="protein sequence ID" value="CAM07411"/>
    <property type="gene ID" value="NMA0092"/>
</dbReference>
<dbReference type="GeneID" id="93387253"/>
<dbReference type="KEGG" id="nma:NMA0092"/>
<dbReference type="HOGENOM" id="CLU_007884_9_2_4"/>
<dbReference type="Proteomes" id="UP000000626">
    <property type="component" value="Chromosome"/>
</dbReference>
<dbReference type="GO" id="GO:0005737">
    <property type="term" value="C:cytoplasm"/>
    <property type="evidence" value="ECO:0007669"/>
    <property type="project" value="TreeGrafter"/>
</dbReference>
<dbReference type="GO" id="GO:0005886">
    <property type="term" value="C:plasma membrane"/>
    <property type="evidence" value="ECO:0007669"/>
    <property type="project" value="TreeGrafter"/>
</dbReference>
<dbReference type="GO" id="GO:0008718">
    <property type="term" value="F:D-amino-acid dehydrogenase activity"/>
    <property type="evidence" value="ECO:0007669"/>
    <property type="project" value="UniProtKB-UniRule"/>
</dbReference>
<dbReference type="GO" id="GO:0055130">
    <property type="term" value="P:D-alanine catabolic process"/>
    <property type="evidence" value="ECO:0007669"/>
    <property type="project" value="TreeGrafter"/>
</dbReference>
<dbReference type="FunFam" id="3.50.50.60:FF:000020">
    <property type="entry name" value="D-amino acid dehydrogenase"/>
    <property type="match status" value="1"/>
</dbReference>
<dbReference type="Gene3D" id="3.30.9.10">
    <property type="entry name" value="D-Amino Acid Oxidase, subunit A, domain 2"/>
    <property type="match status" value="1"/>
</dbReference>
<dbReference type="Gene3D" id="3.50.50.60">
    <property type="entry name" value="FAD/NAD(P)-binding domain"/>
    <property type="match status" value="2"/>
</dbReference>
<dbReference type="HAMAP" id="MF_01202">
    <property type="entry name" value="DadA"/>
    <property type="match status" value="1"/>
</dbReference>
<dbReference type="InterPro" id="IPR023080">
    <property type="entry name" value="DadA"/>
</dbReference>
<dbReference type="InterPro" id="IPR006076">
    <property type="entry name" value="FAD-dep_OxRdtase"/>
</dbReference>
<dbReference type="InterPro" id="IPR036188">
    <property type="entry name" value="FAD/NAD-bd_sf"/>
</dbReference>
<dbReference type="NCBIfam" id="NF001933">
    <property type="entry name" value="PRK00711.1"/>
    <property type="match status" value="1"/>
</dbReference>
<dbReference type="PANTHER" id="PTHR13847:SF280">
    <property type="entry name" value="D-AMINO ACID DEHYDROGENASE"/>
    <property type="match status" value="1"/>
</dbReference>
<dbReference type="PANTHER" id="PTHR13847">
    <property type="entry name" value="SARCOSINE DEHYDROGENASE-RELATED"/>
    <property type="match status" value="1"/>
</dbReference>
<dbReference type="Pfam" id="PF01266">
    <property type="entry name" value="DAO"/>
    <property type="match status" value="1"/>
</dbReference>
<dbReference type="SUPFAM" id="SSF54373">
    <property type="entry name" value="FAD-linked reductases, C-terminal domain"/>
    <property type="match status" value="1"/>
</dbReference>
<dbReference type="SUPFAM" id="SSF51905">
    <property type="entry name" value="FAD/NAD(P)-binding domain"/>
    <property type="match status" value="1"/>
</dbReference>
<sequence length="418" mass="46604">MKVLVLGAGVAGVSSAWYLAEAGHEVTVIDRAEGVAMETSFANAGQLSYGYTTPWAAPGIPTKALKWLFKSHPPLLFRPDGSLYQIEWLWQMLQHCTAARYQINKERMVRMSEYSREMFRRFEAQTGMNFEGRKKGTLQIFRQTKEVEAAKQDIAVLERYGVPYRRLKPEECAEFEPALARVTAKIAGGLHLPADATGDCRLFTENLYKLCQEKGVRFHFNQTISRIDHNGLRIKTVETETGRFEADAVVCALGCFSRTVLAQVDLNLPIYPVKGYSLTLPVTNSDGAPVSTVLDESYKVAITRFNNRIRVGGMAELSGYAIKLPEKRRETLALVVNDLFPEGGDLNQTLFWSGLRPMTPDSTPLIGRTRFDNLFLNTGHGTLGWTMSLGSAKLTADIVSGKDTEIRSDDLSLSRYQA</sequence>
<name>DADA_NEIMA</name>
<organism>
    <name type="scientific">Neisseria meningitidis serogroup A / serotype 4A (strain DSM 15465 / Z2491)</name>
    <dbReference type="NCBI Taxonomy" id="122587"/>
    <lineage>
        <taxon>Bacteria</taxon>
        <taxon>Pseudomonadati</taxon>
        <taxon>Pseudomonadota</taxon>
        <taxon>Betaproteobacteria</taxon>
        <taxon>Neisseriales</taxon>
        <taxon>Neisseriaceae</taxon>
        <taxon>Neisseria</taxon>
    </lineage>
</organism>
<feature type="chain" id="PRO_0000166135" description="D-amino acid dehydrogenase">
    <location>
        <begin position="1"/>
        <end position="418"/>
    </location>
</feature>
<feature type="binding site" evidence="1">
    <location>
        <begin position="3"/>
        <end position="17"/>
    </location>
    <ligand>
        <name>FAD</name>
        <dbReference type="ChEBI" id="CHEBI:57692"/>
    </ligand>
</feature>
<keyword id="KW-0274">FAD</keyword>
<keyword id="KW-0285">Flavoprotein</keyword>
<keyword id="KW-0560">Oxidoreductase</keyword>
<proteinExistence type="inferred from homology"/>
<comment type="function">
    <text evidence="1">Oxidative deamination of D-amino acids.</text>
</comment>
<comment type="catalytic activity">
    <reaction evidence="1">
        <text>a D-alpha-amino acid + A + H2O = a 2-oxocarboxylate + AH2 + NH4(+)</text>
        <dbReference type="Rhea" id="RHEA:18125"/>
        <dbReference type="ChEBI" id="CHEBI:13193"/>
        <dbReference type="ChEBI" id="CHEBI:15377"/>
        <dbReference type="ChEBI" id="CHEBI:17499"/>
        <dbReference type="ChEBI" id="CHEBI:28938"/>
        <dbReference type="ChEBI" id="CHEBI:35179"/>
        <dbReference type="ChEBI" id="CHEBI:59871"/>
    </reaction>
</comment>
<comment type="cofactor">
    <cofactor evidence="1">
        <name>FAD</name>
        <dbReference type="ChEBI" id="CHEBI:57692"/>
    </cofactor>
</comment>
<comment type="similarity">
    <text evidence="1">Belongs to the DadA oxidoreductase family.</text>
</comment>